<comment type="function">
    <text evidence="1">Allows the formation of correctly charged Asn-tRNA(Asn) or Gln-tRNA(Gln) through the transamidation of misacylated Asp-tRNA(Asn) or Glu-tRNA(Gln) in organisms which lack either or both of asparaginyl-tRNA or glutaminyl-tRNA synthetases. The reaction takes place in the presence of glutamine and ATP through an activated phospho-Asp-tRNA(Asn) or phospho-Glu-tRNA(Gln).</text>
</comment>
<comment type="catalytic activity">
    <reaction evidence="1">
        <text>L-glutamyl-tRNA(Gln) + L-glutamine + ATP + H2O = L-glutaminyl-tRNA(Gln) + L-glutamate + ADP + phosphate + H(+)</text>
        <dbReference type="Rhea" id="RHEA:17521"/>
        <dbReference type="Rhea" id="RHEA-COMP:9681"/>
        <dbReference type="Rhea" id="RHEA-COMP:9684"/>
        <dbReference type="ChEBI" id="CHEBI:15377"/>
        <dbReference type="ChEBI" id="CHEBI:15378"/>
        <dbReference type="ChEBI" id="CHEBI:29985"/>
        <dbReference type="ChEBI" id="CHEBI:30616"/>
        <dbReference type="ChEBI" id="CHEBI:43474"/>
        <dbReference type="ChEBI" id="CHEBI:58359"/>
        <dbReference type="ChEBI" id="CHEBI:78520"/>
        <dbReference type="ChEBI" id="CHEBI:78521"/>
        <dbReference type="ChEBI" id="CHEBI:456216"/>
    </reaction>
</comment>
<comment type="catalytic activity">
    <reaction evidence="1">
        <text>L-aspartyl-tRNA(Asn) + L-glutamine + ATP + H2O = L-asparaginyl-tRNA(Asn) + L-glutamate + ADP + phosphate + 2 H(+)</text>
        <dbReference type="Rhea" id="RHEA:14513"/>
        <dbReference type="Rhea" id="RHEA-COMP:9674"/>
        <dbReference type="Rhea" id="RHEA-COMP:9677"/>
        <dbReference type="ChEBI" id="CHEBI:15377"/>
        <dbReference type="ChEBI" id="CHEBI:15378"/>
        <dbReference type="ChEBI" id="CHEBI:29985"/>
        <dbReference type="ChEBI" id="CHEBI:30616"/>
        <dbReference type="ChEBI" id="CHEBI:43474"/>
        <dbReference type="ChEBI" id="CHEBI:58359"/>
        <dbReference type="ChEBI" id="CHEBI:78515"/>
        <dbReference type="ChEBI" id="CHEBI:78516"/>
        <dbReference type="ChEBI" id="CHEBI:456216"/>
    </reaction>
</comment>
<comment type="subunit">
    <text evidence="1">Heterotrimer of A, B and C subunits.</text>
</comment>
<comment type="similarity">
    <text evidence="1">Belongs to the GatC family.</text>
</comment>
<name>GATC_MYCMM</name>
<gene>
    <name evidence="1" type="primary">gatC</name>
    <name type="ordered locus">MMAR_1701</name>
</gene>
<reference key="1">
    <citation type="journal article" date="2008" name="Genome Res.">
        <title>Insights from the complete genome sequence of Mycobacterium marinum on the evolution of Mycobacterium tuberculosis.</title>
        <authorList>
            <person name="Stinear T.P."/>
            <person name="Seemann T."/>
            <person name="Harrison P.F."/>
            <person name="Jenkin G.A."/>
            <person name="Davies J.K."/>
            <person name="Johnson P.D."/>
            <person name="Abdellah Z."/>
            <person name="Arrowsmith C."/>
            <person name="Chillingworth T."/>
            <person name="Churcher C."/>
            <person name="Clarke K."/>
            <person name="Cronin A."/>
            <person name="Davis P."/>
            <person name="Goodhead I."/>
            <person name="Holroyd N."/>
            <person name="Jagels K."/>
            <person name="Lord A."/>
            <person name="Moule S."/>
            <person name="Mungall K."/>
            <person name="Norbertczak H."/>
            <person name="Quail M.A."/>
            <person name="Rabbinowitsch E."/>
            <person name="Walker D."/>
            <person name="White B."/>
            <person name="Whitehead S."/>
            <person name="Small P.L."/>
            <person name="Brosch R."/>
            <person name="Ramakrishnan L."/>
            <person name="Fischbach M.A."/>
            <person name="Parkhill J."/>
            <person name="Cole S.T."/>
        </authorList>
    </citation>
    <scope>NUCLEOTIDE SEQUENCE [LARGE SCALE GENOMIC DNA]</scope>
    <source>
        <strain>ATCC BAA-535 / M</strain>
    </source>
</reference>
<sequence length="99" mass="10556">MSQISRDEVAHLARLARLALTEDELDSFAGQLDAILTHVSQIQAVDVTGVEATDNPLKDVNVMRADQTAPCLTQEEALAEAPAAVDGRFAVPQILGDSE</sequence>
<dbReference type="EC" id="6.3.5.-" evidence="1"/>
<dbReference type="EMBL" id="CP000854">
    <property type="protein sequence ID" value="ACC40150.1"/>
    <property type="molecule type" value="Genomic_DNA"/>
</dbReference>
<dbReference type="RefSeq" id="WP_011740011.1">
    <property type="nucleotide sequence ID" value="NC_010612.1"/>
</dbReference>
<dbReference type="SMR" id="B2HIF6"/>
<dbReference type="STRING" id="216594.MMAR_1701"/>
<dbReference type="GeneID" id="34343475"/>
<dbReference type="GeneID" id="93436276"/>
<dbReference type="KEGG" id="mmi:MMAR_1701"/>
<dbReference type="eggNOG" id="COG0721">
    <property type="taxonomic scope" value="Bacteria"/>
</dbReference>
<dbReference type="HOGENOM" id="CLU_105899_1_0_11"/>
<dbReference type="OrthoDB" id="5295223at2"/>
<dbReference type="Proteomes" id="UP000001190">
    <property type="component" value="Chromosome"/>
</dbReference>
<dbReference type="GO" id="GO:0050566">
    <property type="term" value="F:asparaginyl-tRNA synthase (glutamine-hydrolyzing) activity"/>
    <property type="evidence" value="ECO:0007669"/>
    <property type="project" value="RHEA"/>
</dbReference>
<dbReference type="GO" id="GO:0005524">
    <property type="term" value="F:ATP binding"/>
    <property type="evidence" value="ECO:0007669"/>
    <property type="project" value="UniProtKB-KW"/>
</dbReference>
<dbReference type="GO" id="GO:0050567">
    <property type="term" value="F:glutaminyl-tRNA synthase (glutamine-hydrolyzing) activity"/>
    <property type="evidence" value="ECO:0007669"/>
    <property type="project" value="UniProtKB-UniRule"/>
</dbReference>
<dbReference type="GO" id="GO:0070681">
    <property type="term" value="P:glutaminyl-tRNAGln biosynthesis via transamidation"/>
    <property type="evidence" value="ECO:0007669"/>
    <property type="project" value="TreeGrafter"/>
</dbReference>
<dbReference type="GO" id="GO:0006450">
    <property type="term" value="P:regulation of translational fidelity"/>
    <property type="evidence" value="ECO:0007669"/>
    <property type="project" value="InterPro"/>
</dbReference>
<dbReference type="GO" id="GO:0006412">
    <property type="term" value="P:translation"/>
    <property type="evidence" value="ECO:0007669"/>
    <property type="project" value="UniProtKB-UniRule"/>
</dbReference>
<dbReference type="FunFam" id="1.10.20.60:FF:000001">
    <property type="entry name" value="Aspartyl/glutamyl-tRNA(Asn/Gln) amidotransferase subunit C"/>
    <property type="match status" value="1"/>
</dbReference>
<dbReference type="Gene3D" id="1.10.20.60">
    <property type="entry name" value="Glu-tRNAGln amidotransferase C subunit, N-terminal domain"/>
    <property type="match status" value="1"/>
</dbReference>
<dbReference type="HAMAP" id="MF_00122">
    <property type="entry name" value="GatC"/>
    <property type="match status" value="1"/>
</dbReference>
<dbReference type="InterPro" id="IPR036113">
    <property type="entry name" value="Asp/Glu-ADT_sf_sub_c"/>
</dbReference>
<dbReference type="InterPro" id="IPR003837">
    <property type="entry name" value="GatC"/>
</dbReference>
<dbReference type="NCBIfam" id="TIGR00135">
    <property type="entry name" value="gatC"/>
    <property type="match status" value="1"/>
</dbReference>
<dbReference type="PANTHER" id="PTHR15004">
    <property type="entry name" value="GLUTAMYL-TRNA(GLN) AMIDOTRANSFERASE SUBUNIT C, MITOCHONDRIAL"/>
    <property type="match status" value="1"/>
</dbReference>
<dbReference type="PANTHER" id="PTHR15004:SF0">
    <property type="entry name" value="GLUTAMYL-TRNA(GLN) AMIDOTRANSFERASE SUBUNIT C, MITOCHONDRIAL"/>
    <property type="match status" value="1"/>
</dbReference>
<dbReference type="Pfam" id="PF02686">
    <property type="entry name" value="GatC"/>
    <property type="match status" value="1"/>
</dbReference>
<dbReference type="SUPFAM" id="SSF141000">
    <property type="entry name" value="Glu-tRNAGln amidotransferase C subunit"/>
    <property type="match status" value="1"/>
</dbReference>
<protein>
    <recommendedName>
        <fullName evidence="1">Aspartyl/glutamyl-tRNA(Asn/Gln) amidotransferase subunit C</fullName>
        <shortName evidence="1">Asp/Glu-ADT subunit C</shortName>
        <ecNumber evidence="1">6.3.5.-</ecNumber>
    </recommendedName>
</protein>
<accession>B2HIF6</accession>
<proteinExistence type="inferred from homology"/>
<keyword id="KW-0067">ATP-binding</keyword>
<keyword id="KW-0436">Ligase</keyword>
<keyword id="KW-0547">Nucleotide-binding</keyword>
<keyword id="KW-0648">Protein biosynthesis</keyword>
<keyword id="KW-1185">Reference proteome</keyword>
<organism>
    <name type="scientific">Mycobacterium marinum (strain ATCC BAA-535 / M)</name>
    <dbReference type="NCBI Taxonomy" id="216594"/>
    <lineage>
        <taxon>Bacteria</taxon>
        <taxon>Bacillati</taxon>
        <taxon>Actinomycetota</taxon>
        <taxon>Actinomycetes</taxon>
        <taxon>Mycobacteriales</taxon>
        <taxon>Mycobacteriaceae</taxon>
        <taxon>Mycobacterium</taxon>
        <taxon>Mycobacterium ulcerans group</taxon>
    </lineage>
</organism>
<evidence type="ECO:0000255" key="1">
    <source>
        <dbReference type="HAMAP-Rule" id="MF_00122"/>
    </source>
</evidence>
<feature type="chain" id="PRO_1000095299" description="Aspartyl/glutamyl-tRNA(Asn/Gln) amidotransferase subunit C">
    <location>
        <begin position="1"/>
        <end position="99"/>
    </location>
</feature>